<feature type="chain" id="PRO_0000169914" description="Galactose-1-phosphate uridylyltransferase 1">
    <location>
        <begin position="1"/>
        <end position="491"/>
    </location>
</feature>
<name>GALT1_STRPN</name>
<comment type="catalytic activity">
    <reaction>
        <text>alpha-D-galactose 1-phosphate + UDP-alpha-D-glucose = alpha-D-glucose 1-phosphate + UDP-alpha-D-galactose</text>
        <dbReference type="Rhea" id="RHEA:13989"/>
        <dbReference type="ChEBI" id="CHEBI:58336"/>
        <dbReference type="ChEBI" id="CHEBI:58601"/>
        <dbReference type="ChEBI" id="CHEBI:58885"/>
        <dbReference type="ChEBI" id="CHEBI:66914"/>
        <dbReference type="EC" id="2.7.7.12"/>
    </reaction>
</comment>
<comment type="pathway">
    <text>Carbohydrate metabolism; galactose metabolism.</text>
</comment>
<comment type="subcellular location">
    <subcellularLocation>
        <location evidence="1">Cytoplasm</location>
    </subcellularLocation>
</comment>
<comment type="similarity">
    <text evidence="1">Belongs to the galactose-1-phosphate uridylyltransferase type 2 family.</text>
</comment>
<proteinExistence type="inferred from homology"/>
<keyword id="KW-0119">Carbohydrate metabolism</keyword>
<keyword id="KW-0963">Cytoplasm</keyword>
<keyword id="KW-0299">Galactose metabolism</keyword>
<keyword id="KW-0548">Nucleotidyltransferase</keyword>
<keyword id="KW-1185">Reference proteome</keyword>
<keyword id="KW-0808">Transferase</keyword>
<gene>
    <name type="primary">galT1</name>
    <name type="ordered locus">SP_1829</name>
</gene>
<protein>
    <recommendedName>
        <fullName>Galactose-1-phosphate uridylyltransferase 1</fullName>
        <shortName>Gal-1-P uridylyltransferase 1</shortName>
        <ecNumber>2.7.7.12</ecNumber>
    </recommendedName>
    <alternativeName>
        <fullName>UDP-glucose--hexose-1-phosphate uridylyltransferase 1</fullName>
    </alternativeName>
</protein>
<organism>
    <name type="scientific">Streptococcus pneumoniae serotype 4 (strain ATCC BAA-334 / TIGR4)</name>
    <dbReference type="NCBI Taxonomy" id="170187"/>
    <lineage>
        <taxon>Bacteria</taxon>
        <taxon>Bacillati</taxon>
        <taxon>Bacillota</taxon>
        <taxon>Bacilli</taxon>
        <taxon>Lactobacillales</taxon>
        <taxon>Streptococcaceae</taxon>
        <taxon>Streptococcus</taxon>
    </lineage>
</organism>
<reference key="1">
    <citation type="journal article" date="2001" name="Science">
        <title>Complete genome sequence of a virulent isolate of Streptococcus pneumoniae.</title>
        <authorList>
            <person name="Tettelin H."/>
            <person name="Nelson K.E."/>
            <person name="Paulsen I.T."/>
            <person name="Eisen J.A."/>
            <person name="Read T.D."/>
            <person name="Peterson S.N."/>
            <person name="Heidelberg J.F."/>
            <person name="DeBoy R.T."/>
            <person name="Haft D.H."/>
            <person name="Dodson R.J."/>
            <person name="Durkin A.S."/>
            <person name="Gwinn M.L."/>
            <person name="Kolonay J.F."/>
            <person name="Nelson W.C."/>
            <person name="Peterson J.D."/>
            <person name="Umayam L.A."/>
            <person name="White O."/>
            <person name="Salzberg S.L."/>
            <person name="Lewis M.R."/>
            <person name="Radune D."/>
            <person name="Holtzapple E.K."/>
            <person name="Khouri H.M."/>
            <person name="Wolf A.M."/>
            <person name="Utterback T.R."/>
            <person name="Hansen C.L."/>
            <person name="McDonald L.A."/>
            <person name="Feldblyum T.V."/>
            <person name="Angiuoli S.V."/>
            <person name="Dickinson T."/>
            <person name="Hickey E.K."/>
            <person name="Holt I.E."/>
            <person name="Loftus B.J."/>
            <person name="Yang F."/>
            <person name="Smith H.O."/>
            <person name="Venter J.C."/>
            <person name="Dougherty B.A."/>
            <person name="Morrison D.A."/>
            <person name="Hollingshead S.K."/>
            <person name="Fraser C.M."/>
        </authorList>
    </citation>
    <scope>NUCLEOTIDE SEQUENCE [LARGE SCALE GENOMIC DNA]</scope>
    <source>
        <strain>ATCC BAA-334 / TIGR4</strain>
    </source>
</reference>
<sequence length="491" mass="56381">MKTIIDNFVDRVIEYGMYNEIDKIYVKNRVLALIGEEGIDRISDENDLKQIKDYLVEIALKNGKIKDLIEEKECLGAELMNFIVPLPSRLNDIFWSSYDISPQEAVEEFYKLSKDSDYIKTSAIAKNIEFRASTKYGELEITINLSKPEKDPKTIAAEKLVKATNYPKCLLCMENEGYQGRINYPARSNHRIIRLKLGDEVWGFQYSPYSYFNEHAIFLNSQHVPMAITSKTFEQLLEIVDILPGYFAGSNSDLPISGGSILSHNHYQGGKHIFPMEKAKFESEFCFKDFEDVNAGIVKWPMSVIRLQSENKNRLLDLATKILNKWREYSDLEVDIIAMTEDVPHHTVTPIARKVDGRYELDIVLRDNHTTEQYPDGVFHPHQDVQHIKKENIGLIEVMGLAILPPRLKPELEEVGKYLLGEDNAIADYHLEWADQLKEKYPRINKEEVNSVVQHEAGQVFARVLEDAGVYKNTPSGHEAFMRFVKSVGIN</sequence>
<evidence type="ECO:0000305" key="1"/>
<accession>Q97P15</accession>
<dbReference type="EC" id="2.7.7.12"/>
<dbReference type="EMBL" id="AE005672">
    <property type="protein sequence ID" value="AAK75902.1"/>
    <property type="molecule type" value="Genomic_DNA"/>
</dbReference>
<dbReference type="PIR" id="E95213">
    <property type="entry name" value="E95213"/>
</dbReference>
<dbReference type="PaxDb" id="170187-SP_1829"/>
<dbReference type="EnsemblBacteria" id="AAK75902">
    <property type="protein sequence ID" value="AAK75902"/>
    <property type="gene ID" value="SP_1829"/>
</dbReference>
<dbReference type="KEGG" id="spn:SP_1829"/>
<dbReference type="eggNOG" id="COG4468">
    <property type="taxonomic scope" value="Bacteria"/>
</dbReference>
<dbReference type="PhylomeDB" id="Q97P15"/>
<dbReference type="BioCyc" id="SPNE170187:G1FZB-1859-MONOMER"/>
<dbReference type="UniPathway" id="UPA00214"/>
<dbReference type="Proteomes" id="UP000000585">
    <property type="component" value="Chromosome"/>
</dbReference>
<dbReference type="GO" id="GO:0005737">
    <property type="term" value="C:cytoplasm"/>
    <property type="evidence" value="ECO:0007669"/>
    <property type="project" value="UniProtKB-SubCell"/>
</dbReference>
<dbReference type="GO" id="GO:0008108">
    <property type="term" value="F:UDP-glucose:hexose-1-phosphate uridylyltransferase activity"/>
    <property type="evidence" value="ECO:0007669"/>
    <property type="project" value="UniProtKB-UniRule"/>
</dbReference>
<dbReference type="GO" id="GO:0006012">
    <property type="term" value="P:galactose metabolic process"/>
    <property type="evidence" value="ECO:0007669"/>
    <property type="project" value="UniProtKB-UniRule"/>
</dbReference>
<dbReference type="HAMAP" id="MF_00571">
    <property type="entry name" value="GalP_UDP_trans"/>
    <property type="match status" value="1"/>
</dbReference>
<dbReference type="InterPro" id="IPR000766">
    <property type="entry name" value="GalP_uridyl_Trfase_II"/>
</dbReference>
<dbReference type="InterPro" id="IPR023425">
    <property type="entry name" value="GalP_uridyl_Trfase_II_CS"/>
</dbReference>
<dbReference type="InterPro" id="IPR005850">
    <property type="entry name" value="GalP_Utransf_C"/>
</dbReference>
<dbReference type="InterPro" id="IPR005849">
    <property type="entry name" value="GalP_Utransf_N"/>
</dbReference>
<dbReference type="NCBIfam" id="TIGR01239">
    <property type="entry name" value="galT_2"/>
    <property type="match status" value="1"/>
</dbReference>
<dbReference type="NCBIfam" id="NF003629">
    <property type="entry name" value="PRK05270.1-2"/>
    <property type="match status" value="1"/>
</dbReference>
<dbReference type="NCBIfam" id="NF003631">
    <property type="entry name" value="PRK05270.1-5"/>
    <property type="match status" value="1"/>
</dbReference>
<dbReference type="NCBIfam" id="NF003633">
    <property type="entry name" value="PRK05270.2-2"/>
    <property type="match status" value="1"/>
</dbReference>
<dbReference type="PANTHER" id="PTHR39191:SF1">
    <property type="entry name" value="DUF4922 DOMAIN-CONTAINING PROTEIN"/>
    <property type="match status" value="1"/>
</dbReference>
<dbReference type="PANTHER" id="PTHR39191">
    <property type="entry name" value="GALACTOSE-1-PHOSPHATE URIDYLYLTRANSFERASE"/>
    <property type="match status" value="1"/>
</dbReference>
<dbReference type="Pfam" id="PF02744">
    <property type="entry name" value="GalP_UDP_tr_C"/>
    <property type="match status" value="1"/>
</dbReference>
<dbReference type="Pfam" id="PF01087">
    <property type="entry name" value="GalP_UDP_transf"/>
    <property type="match status" value="1"/>
</dbReference>
<dbReference type="PIRSF" id="PIRSF006005">
    <property type="entry name" value="GalT_BS"/>
    <property type="match status" value="1"/>
</dbReference>
<dbReference type="PROSITE" id="PS01163">
    <property type="entry name" value="GAL_P_UDP_TRANSF_II"/>
    <property type="match status" value="1"/>
</dbReference>